<comment type="function">
    <text evidence="1 3">Molecular chaperone that promotes the maturation, structural maintenance and proper regulation of specific target proteins involved in cell cycle control and signal transduction such as CNA2. Undergoes a functional cycle that is linked to its ATPase activity (By similarity). Interacts dynamically with various co-chaperones that modulate its substrate recognition, ATPase cycle and chaperone function. Required for growth at high temperatures.</text>
</comment>
<comment type="subunit">
    <text evidence="3 6 7">Interacts with the co-chaperone SGT1. Interacts directly with the substrate CNA2. Interacts with NAP1.</text>
</comment>
<comment type="interaction">
    <interactant intactId="EBI-8666">
        <id>P15108</id>
    </interactant>
    <interactant intactId="EBI-37072">
        <id>Q12449</id>
        <label>AHA1</label>
    </interactant>
    <organismsDiffer>false</organismsDiffer>
    <experiments>4</experiments>
</comment>
<comment type="interaction">
    <interactant intactId="EBI-8666">
        <id>P15108</id>
    </interactant>
    <interactant intactId="EBI-2883">
        <id>P08566</id>
        <label>ARO1</label>
    </interactant>
    <organismsDiffer>false</organismsDiffer>
    <experiments>3</experiments>
</comment>
<comment type="interaction">
    <interactant intactId="EBI-8666">
        <id>P15108</id>
    </interactant>
    <interactant intactId="EBI-4806">
        <id>P33313</id>
        <label>CNS1</label>
    </interactant>
    <organismsDiffer>false</organismsDiffer>
    <experiments>2</experiments>
</comment>
<comment type="interaction">
    <interactant intactId="EBI-8666">
        <id>P15108</id>
    </interactant>
    <interactant intactId="EBI-5436">
        <id>P47103</id>
        <label>CPR7</label>
    </interactant>
    <organismsDiffer>false</organismsDiffer>
    <experiments>2</experiments>
</comment>
<comment type="interaction">
    <interactant intactId="EBI-8666">
        <id>P15108</id>
    </interactant>
    <interactant intactId="EBI-13796">
        <id>P53043</id>
        <label>PPT1</label>
    </interactant>
    <organismsDiffer>false</organismsDiffer>
    <experiments>3</experiments>
</comment>
<comment type="interaction">
    <interactant intactId="EBI-8666">
        <id>P15108</id>
    </interactant>
    <interactant intactId="EBI-21365">
        <id>P38164</id>
        <label>SEA4</label>
    </interactant>
    <organismsDiffer>false</organismsDiffer>
    <experiments>2</experiments>
</comment>
<comment type="interaction">
    <interactant intactId="EBI-8666">
        <id>P15108</id>
    </interactant>
    <interactant intactId="EBI-1797">
        <id>Q02821</id>
        <label>SRP1</label>
    </interactant>
    <organismsDiffer>false</organismsDiffer>
    <experiments>2</experiments>
</comment>
<comment type="interaction">
    <interactant intactId="EBI-8666">
        <id>P15108</id>
    </interactant>
    <interactant intactId="EBI-8591">
        <id>P10591</id>
        <label>SSA1</label>
    </interactant>
    <organismsDiffer>false</organismsDiffer>
    <experiments>2</experiments>
</comment>
<comment type="interaction">
    <interactant intactId="EBI-8666">
        <id>P15108</id>
    </interactant>
    <interactant intactId="EBI-18418">
        <id>P15705</id>
        <label>STI1</label>
    </interactant>
    <organismsDiffer>false</organismsDiffer>
    <experiments>4</experiments>
</comment>
<comment type="interaction">
    <interactant intactId="EBI-8666">
        <id>P15108</id>
    </interactant>
    <interactant intactId="EBI-9017">
        <id>P10081</id>
        <label>TIF2</label>
    </interactant>
    <organismsDiffer>false</organismsDiffer>
    <experiments>3</experiments>
</comment>
<comment type="subcellular location">
    <subcellularLocation>
        <location>Cytoplasm</location>
    </subcellularLocation>
    <subcellularLocation>
        <location>Mitochondrion</location>
    </subcellularLocation>
</comment>
<comment type="induction">
    <text evidence="8 10">Expressed constitutively at a high level and is moderately induced by high temperatures dependent on transcription factor HSF1.</text>
</comment>
<comment type="domain">
    <text evidence="1">The TPR repeat-binding motif mediates interaction with TPR repeat-containing proteins.</text>
</comment>
<comment type="miscellaneous">
    <text evidence="5">Present with 132053 molecules/cell in log phase SD medium.</text>
</comment>
<comment type="similarity">
    <text evidence="11">Belongs to the heat shock protein 90 family.</text>
</comment>
<keyword id="KW-0002">3D-structure</keyword>
<keyword id="KW-0067">ATP-binding</keyword>
<keyword id="KW-0143">Chaperone</keyword>
<keyword id="KW-0175">Coiled coil</keyword>
<keyword id="KW-0963">Cytoplasm</keyword>
<keyword id="KW-0903">Direct protein sequencing</keyword>
<keyword id="KW-0496">Mitochondrion</keyword>
<keyword id="KW-0547">Nucleotide-binding</keyword>
<keyword id="KW-0597">Phosphoprotein</keyword>
<keyword id="KW-1185">Reference proteome</keyword>
<keyword id="KW-0677">Repeat</keyword>
<keyword id="KW-0346">Stress response</keyword>
<sequence>MAGETFEFQAEITQLMSLIINTVYSNKEIFLRELISNASDALDKIRYQALSDPKQLETEPDLFIRITPKPEEKVLEIRDSGIGMTKAELINNLGTIAKSGTKAFMEALSAGADVSMIGQFGVGFYSLFLVADRVQVISKNNEDEQYIWESNAGGSFTVTLDEVNERIGRGTVLRLFLKDDQLEYLEEKRIKEVIKRHSEFVAYPIQLLVTKEVEKEVPIPEEEKKDEEKKDEDDKKPKLEEVDEEEEEKKPKTKKVKEEVQELEELNKTKPLWTRNPSDITQEEYNAFYKSISNDWEDPLYVKHFSVEGQLEFRAILFIPKRAPFDLFESKKKKNNIKLYVRRVFITDEAEDLIPEWLSFVKGVVDSEDLPLNLSREMLQQNKIMKVIRKNIVKKLIEAFNEIAEDSEQFDKFYSAFAKNIKLGVHEDTQNRAALAKLLRYNSTKSVDELTSLTDYVTRMPEHQKNIYYITGESLKAVEKSPFLDALKAKNFEVLFLTDPIDEYAFTQLKEFEGKTLVDITKDFELEETDEEKAEREKEIKEYEPLTKALKDILGDQVEKVVVSYKLLDAPAAIRTGQFGWSANMERIMKAQALRDSSMSSYMSSKKTFEISPKSPIIKELKKRVDEGGAQDKTVKDLTNLLFETALLTSGFSLEEPTSFASRINRLISLGLNIDEDEETETAPEASTEAPVEEVPADTEMEEVD</sequence>
<evidence type="ECO:0000250" key="1"/>
<evidence type="ECO:0000256" key="2">
    <source>
        <dbReference type="SAM" id="MobiDB-lite"/>
    </source>
</evidence>
<evidence type="ECO:0000269" key="3">
    <source>
    </source>
</evidence>
<evidence type="ECO:0000269" key="4">
    <source>
    </source>
</evidence>
<evidence type="ECO:0000269" key="5">
    <source>
    </source>
</evidence>
<evidence type="ECO:0000269" key="6">
    <source>
    </source>
</evidence>
<evidence type="ECO:0000269" key="7">
    <source>
    </source>
</evidence>
<evidence type="ECO:0000269" key="8">
    <source>
    </source>
</evidence>
<evidence type="ECO:0000269" key="9">
    <source>
    </source>
</evidence>
<evidence type="ECO:0000269" key="10">
    <source>
    </source>
</evidence>
<evidence type="ECO:0000305" key="11"/>
<evidence type="ECO:0007744" key="12">
    <source>
    </source>
</evidence>
<evidence type="ECO:0007829" key="13">
    <source>
        <dbReference type="PDB" id="6XLE"/>
    </source>
</evidence>
<evidence type="ECO:0007829" key="14">
    <source>
        <dbReference type="PDB" id="6XLG"/>
    </source>
</evidence>
<proteinExistence type="evidence at protein level"/>
<feature type="initiator methionine" description="Removed" evidence="9">
    <location>
        <position position="1"/>
    </location>
</feature>
<feature type="chain" id="PRO_0000062958" description="ATP-dependent molecular chaperone HSC82">
    <location>
        <begin position="2"/>
        <end position="705"/>
    </location>
</feature>
<feature type="repeat" description="1">
    <location>
        <begin position="221"/>
        <end position="225"/>
    </location>
</feature>
<feature type="repeat" description="2">
    <location>
        <begin position="226"/>
        <end position="230"/>
    </location>
</feature>
<feature type="repeat" description="3">
    <location>
        <begin position="232"/>
        <end position="236"/>
    </location>
</feature>
<feature type="repeat" description="4">
    <location>
        <begin position="246"/>
        <end position="250"/>
    </location>
</feature>
<feature type="region of interest" description="Disordered" evidence="2">
    <location>
        <begin position="219"/>
        <end position="257"/>
    </location>
</feature>
<feature type="region of interest" description="4 X 5 AA repeats of [DE]-[DE]-[DE]-K-K; highly charged region">
    <location>
        <begin position="221"/>
        <end position="259"/>
    </location>
</feature>
<feature type="region of interest" description="Disordered" evidence="2">
    <location>
        <begin position="675"/>
        <end position="705"/>
    </location>
</feature>
<feature type="short sequence motif" description="TPR repeat-binding">
    <location>
        <begin position="701"/>
        <end position="705"/>
    </location>
</feature>
<feature type="compositionally biased region" description="Basic and acidic residues" evidence="2">
    <location>
        <begin position="219"/>
        <end position="240"/>
    </location>
</feature>
<feature type="compositionally biased region" description="Acidic residues" evidence="2">
    <location>
        <begin position="691"/>
        <end position="705"/>
    </location>
</feature>
<feature type="binding site" evidence="1">
    <location>
        <position position="37"/>
    </location>
    <ligand>
        <name>ATP</name>
        <dbReference type="ChEBI" id="CHEBI:30616"/>
    </ligand>
</feature>
<feature type="binding site" evidence="1">
    <location>
        <position position="79"/>
    </location>
    <ligand>
        <name>ATP</name>
        <dbReference type="ChEBI" id="CHEBI:30616"/>
    </ligand>
</feature>
<feature type="binding site" evidence="1">
    <location>
        <position position="98"/>
    </location>
    <ligand>
        <name>ATP</name>
        <dbReference type="ChEBI" id="CHEBI:30616"/>
    </ligand>
</feature>
<feature type="binding site" evidence="1">
    <location>
        <position position="124"/>
    </location>
    <ligand>
        <name>ATP</name>
        <dbReference type="ChEBI" id="CHEBI:30616"/>
    </ligand>
</feature>
<feature type="binding site" evidence="1">
    <location>
        <position position="376"/>
    </location>
    <ligand>
        <name>ATP</name>
        <dbReference type="ChEBI" id="CHEBI:30616"/>
    </ligand>
</feature>
<feature type="modified residue" description="Phosphoserine" evidence="12">
    <location>
        <position position="653"/>
    </location>
</feature>
<feature type="mutagenesis site" description="Leads to growth defect at 37 degrees Celsius, probably by disrupting the intramolecular interaction of the N-termini with the middle domains; when associated with A-493." evidence="4">
    <original>L</original>
    <variation>A</variation>
    <location>
        <position position="453"/>
    </location>
</feature>
<feature type="mutagenesis site" description="Leads to growth defect at 37 degrees Celsius, probably by disrupting the intramolecular interaction of the N-termini with the middle domains; when associated with A-453." evidence="4">
    <original>E</original>
    <variation>A</variation>
    <location>
        <position position="493"/>
    </location>
</feature>
<feature type="sequence conflict" description="In Ref. 1." evidence="11" ref="1">
    <original>K</original>
    <variation>I</variation>
    <location>
        <position position="619"/>
    </location>
</feature>
<feature type="sequence conflict" description="In Ref. 1." evidence="11" ref="1">
    <original>L</original>
    <variation>T</variation>
    <location>
        <position position="621"/>
    </location>
</feature>
<feature type="strand" evidence="14">
    <location>
        <begin position="4"/>
        <end position="7"/>
    </location>
</feature>
<feature type="helix" evidence="14">
    <location>
        <begin position="12"/>
        <end position="21"/>
    </location>
</feature>
<feature type="strand" evidence="13">
    <location>
        <begin position="25"/>
        <end position="27"/>
    </location>
</feature>
<feature type="helix" evidence="14">
    <location>
        <begin position="29"/>
        <end position="49"/>
    </location>
</feature>
<feature type="helix" evidence="14">
    <location>
        <begin position="53"/>
        <end position="55"/>
    </location>
</feature>
<feature type="turn" evidence="14">
    <location>
        <begin position="56"/>
        <end position="58"/>
    </location>
</feature>
<feature type="strand" evidence="14">
    <location>
        <begin position="64"/>
        <end position="69"/>
    </location>
</feature>
<feature type="turn" evidence="14">
    <location>
        <begin position="70"/>
        <end position="73"/>
    </location>
</feature>
<feature type="strand" evidence="14">
    <location>
        <begin position="74"/>
        <end position="79"/>
    </location>
</feature>
<feature type="helix" evidence="14">
    <location>
        <begin position="86"/>
        <end position="91"/>
    </location>
</feature>
<feature type="turn" evidence="14">
    <location>
        <begin position="92"/>
        <end position="94"/>
    </location>
</feature>
<feature type="helix" evidence="14">
    <location>
        <begin position="100"/>
        <end position="106"/>
    </location>
</feature>
<feature type="helix" evidence="14">
    <location>
        <begin position="124"/>
        <end position="129"/>
    </location>
</feature>
<feature type="strand" evidence="14">
    <location>
        <begin position="131"/>
        <end position="139"/>
    </location>
</feature>
<feature type="strand" evidence="14">
    <location>
        <begin position="145"/>
        <end position="150"/>
    </location>
</feature>
<feature type="strand" evidence="14">
    <location>
        <begin position="152"/>
        <end position="160"/>
    </location>
</feature>
<feature type="strand" evidence="13">
    <location>
        <begin position="162"/>
        <end position="164"/>
    </location>
</feature>
<feature type="strand" evidence="14">
    <location>
        <begin position="168"/>
        <end position="177"/>
    </location>
</feature>
<feature type="helix" evidence="14">
    <location>
        <begin position="182"/>
        <end position="185"/>
    </location>
</feature>
<feature type="helix" evidence="14">
    <location>
        <begin position="187"/>
        <end position="197"/>
    </location>
</feature>
<feature type="strand" evidence="14">
    <location>
        <begin position="205"/>
        <end position="210"/>
    </location>
</feature>
<feature type="strand" evidence="14">
    <location>
        <begin position="261"/>
        <end position="266"/>
    </location>
</feature>
<feature type="strand" evidence="13">
    <location>
        <begin position="272"/>
        <end position="275"/>
    </location>
</feature>
<feature type="turn" evidence="14">
    <location>
        <begin position="277"/>
        <end position="279"/>
    </location>
</feature>
<feature type="helix" evidence="14">
    <location>
        <begin position="282"/>
        <end position="292"/>
    </location>
</feature>
<feature type="strand" evidence="14">
    <location>
        <begin position="300"/>
        <end position="307"/>
    </location>
</feature>
<feature type="strand" evidence="14">
    <location>
        <begin position="309"/>
        <end position="311"/>
    </location>
</feature>
<feature type="strand" evidence="14">
    <location>
        <begin position="313"/>
        <end position="319"/>
    </location>
</feature>
<feature type="strand" evidence="14">
    <location>
        <begin position="337"/>
        <end position="343"/>
    </location>
</feature>
<feature type="strand" evidence="14">
    <location>
        <begin position="345"/>
        <end position="348"/>
    </location>
</feature>
<feature type="turn" evidence="13">
    <location>
        <begin position="351"/>
        <end position="353"/>
    </location>
</feature>
<feature type="helix" evidence="14">
    <location>
        <begin position="356"/>
        <end position="358"/>
    </location>
</feature>
<feature type="strand" evidence="14">
    <location>
        <begin position="362"/>
        <end position="368"/>
    </location>
</feature>
<feature type="strand" evidence="14">
    <location>
        <begin position="374"/>
        <end position="379"/>
    </location>
</feature>
<feature type="helix" evidence="14">
    <location>
        <begin position="385"/>
        <end position="405"/>
    </location>
</feature>
<feature type="helix" evidence="14">
    <location>
        <begin position="407"/>
        <end position="427"/>
    </location>
</feature>
<feature type="helix" evidence="14">
    <location>
        <begin position="432"/>
        <end position="435"/>
    </location>
</feature>
<feature type="helix" evidence="14">
    <location>
        <begin position="436"/>
        <end position="438"/>
    </location>
</feature>
<feature type="strand" evidence="14">
    <location>
        <begin position="440"/>
        <end position="445"/>
    </location>
</feature>
<feature type="strand" evidence="14">
    <location>
        <begin position="447"/>
        <end position="449"/>
    </location>
</feature>
<feature type="helix" evidence="14">
    <location>
        <begin position="453"/>
        <end position="458"/>
    </location>
</feature>
<feature type="strand" evidence="14">
    <location>
        <begin position="466"/>
        <end position="470"/>
    </location>
</feature>
<feature type="strand" evidence="14">
    <location>
        <begin position="473"/>
        <end position="475"/>
    </location>
</feature>
<feature type="helix" evidence="14">
    <location>
        <begin position="476"/>
        <end position="479"/>
    </location>
</feature>
<feature type="helix" evidence="14">
    <location>
        <begin position="484"/>
        <end position="489"/>
    </location>
</feature>
<feature type="strand" evidence="14">
    <location>
        <begin position="494"/>
        <end position="496"/>
    </location>
</feature>
<feature type="helix" evidence="14">
    <location>
        <begin position="501"/>
        <end position="509"/>
    </location>
</feature>
<feature type="strand" evidence="14">
    <location>
        <begin position="515"/>
        <end position="519"/>
    </location>
</feature>
<feature type="helix" evidence="14">
    <location>
        <begin position="530"/>
        <end position="542"/>
    </location>
</feature>
<feature type="helix" evidence="14">
    <location>
        <begin position="544"/>
        <end position="554"/>
    </location>
</feature>
<feature type="helix" evidence="13">
    <location>
        <begin position="555"/>
        <end position="557"/>
    </location>
</feature>
<feature type="strand" evidence="14">
    <location>
        <begin position="561"/>
        <end position="563"/>
    </location>
</feature>
<feature type="strand" evidence="14">
    <location>
        <begin position="571"/>
        <end position="576"/>
    </location>
</feature>
<feature type="strand" evidence="13">
    <location>
        <begin position="578"/>
        <end position="580"/>
    </location>
</feature>
<feature type="helix" evidence="14">
    <location>
        <begin position="583"/>
        <end position="589"/>
    </location>
</feature>
<feature type="strand" evidence="14">
    <location>
        <begin position="607"/>
        <end position="611"/>
    </location>
</feature>
<feature type="helix" evidence="14">
    <location>
        <begin position="616"/>
        <end position="627"/>
    </location>
</feature>
<feature type="helix" evidence="14">
    <location>
        <begin position="633"/>
        <end position="650"/>
    </location>
</feature>
<feature type="helix" evidence="14">
    <location>
        <begin position="657"/>
        <end position="671"/>
    </location>
</feature>
<accession>P15108</accession>
<accession>D6W010</accession>
<protein>
    <recommendedName>
        <fullName>ATP-dependent molecular chaperone HSC82</fullName>
    </recommendedName>
    <alternativeName>
        <fullName>82 kDa heat shock cognate protein</fullName>
    </alternativeName>
    <alternativeName>
        <fullName>Heat shock protein Hsp90 constitutive isoform</fullName>
    </alternativeName>
</protein>
<gene>
    <name type="primary">HSC82</name>
    <name type="ordered locus">YMR186W</name>
    <name type="ORF">YM8010.16</name>
</gene>
<dbReference type="EMBL" id="M26044">
    <property type="protein sequence ID" value="AAA02813.1"/>
    <property type="molecule type" value="Unassigned_DNA"/>
</dbReference>
<dbReference type="EMBL" id="Z49808">
    <property type="protein sequence ID" value="CAA89919.1"/>
    <property type="molecule type" value="Genomic_DNA"/>
</dbReference>
<dbReference type="EMBL" id="BK006946">
    <property type="protein sequence ID" value="DAA10084.1"/>
    <property type="molecule type" value="Genomic_DNA"/>
</dbReference>
<dbReference type="PIR" id="S55133">
    <property type="entry name" value="S55133"/>
</dbReference>
<dbReference type="RefSeq" id="NP_013911.1">
    <property type="nucleotide sequence ID" value="NM_001182692.1"/>
</dbReference>
<dbReference type="PDB" id="6XLB">
    <property type="method" value="EM"/>
    <property type="resolution" value="3.80 A"/>
    <property type="chains" value="A/B=1-705"/>
</dbReference>
<dbReference type="PDB" id="6XLC">
    <property type="method" value="EM"/>
    <property type="resolution" value="3.66 A"/>
    <property type="chains" value="A/B=1-705"/>
</dbReference>
<dbReference type="PDB" id="6XLD">
    <property type="method" value="EM"/>
    <property type="resolution" value="3.66 A"/>
    <property type="chains" value="A/B=1-705"/>
</dbReference>
<dbReference type="PDB" id="6XLE">
    <property type="method" value="EM"/>
    <property type="resolution" value="2.74 A"/>
    <property type="chains" value="A/B=1-705"/>
</dbReference>
<dbReference type="PDB" id="6XLF">
    <property type="method" value="EM"/>
    <property type="resolution" value="3.15 A"/>
    <property type="chains" value="A/B=1-705"/>
</dbReference>
<dbReference type="PDB" id="6XLG">
    <property type="method" value="EM"/>
    <property type="resolution" value="2.71 A"/>
    <property type="chains" value="A/B=1-705"/>
</dbReference>
<dbReference type="PDB" id="6XLH">
    <property type="method" value="EM"/>
    <property type="resolution" value="2.83 A"/>
    <property type="chains" value="A/B=1-705"/>
</dbReference>
<dbReference type="PDBsum" id="6XLB"/>
<dbReference type="PDBsum" id="6XLC"/>
<dbReference type="PDBsum" id="6XLD"/>
<dbReference type="PDBsum" id="6XLE"/>
<dbReference type="PDBsum" id="6XLF"/>
<dbReference type="PDBsum" id="6XLG"/>
<dbReference type="PDBsum" id="6XLH"/>
<dbReference type="BMRB" id="P15108"/>
<dbReference type="EMDB" id="EMD-22238"/>
<dbReference type="EMDB" id="EMD-22239"/>
<dbReference type="EMDB" id="EMD-22240"/>
<dbReference type="EMDB" id="EMD-22241"/>
<dbReference type="EMDB" id="EMD-22242"/>
<dbReference type="EMDB" id="EMD-22243"/>
<dbReference type="EMDB" id="EMD-22244"/>
<dbReference type="SMR" id="P15108"/>
<dbReference type="BioGRID" id="35364">
    <property type="interactions" value="2254"/>
</dbReference>
<dbReference type="ComplexPortal" id="CPX-1276">
    <property type="entry name" value="HMC complex"/>
</dbReference>
<dbReference type="DIP" id="DIP-1524N"/>
<dbReference type="FunCoup" id="P15108">
    <property type="interactions" value="1724"/>
</dbReference>
<dbReference type="IntAct" id="P15108">
    <property type="interactions" value="196"/>
</dbReference>
<dbReference type="MINT" id="P15108"/>
<dbReference type="STRING" id="4932.YMR186W"/>
<dbReference type="ChEMBL" id="CHEMBL4199"/>
<dbReference type="iPTMnet" id="P15108"/>
<dbReference type="PaxDb" id="4932-YMR186W"/>
<dbReference type="PeptideAtlas" id="P15108"/>
<dbReference type="TopDownProteomics" id="P15108"/>
<dbReference type="EnsemblFungi" id="YMR186W_mRNA">
    <property type="protein sequence ID" value="YMR186W"/>
    <property type="gene ID" value="YMR186W"/>
</dbReference>
<dbReference type="GeneID" id="855224"/>
<dbReference type="KEGG" id="sce:YMR186W"/>
<dbReference type="AGR" id="SGD:S000004798"/>
<dbReference type="SGD" id="S000004798">
    <property type="gene designation" value="HSC82"/>
</dbReference>
<dbReference type="VEuPathDB" id="FungiDB:YMR186W"/>
<dbReference type="eggNOG" id="KOG0019">
    <property type="taxonomic scope" value="Eukaryota"/>
</dbReference>
<dbReference type="GeneTree" id="ENSGT01020000230401"/>
<dbReference type="HOGENOM" id="CLU_006684_1_3_1"/>
<dbReference type="InParanoid" id="P15108"/>
<dbReference type="OMA" id="TRMKAEQ"/>
<dbReference type="OrthoDB" id="28737at2759"/>
<dbReference type="BioCyc" id="YEAST:G3O-32874-MONOMER"/>
<dbReference type="Reactome" id="R-SCE-1474151">
    <property type="pathway name" value="Tetrahydrobiopterin (BH4) synthesis, recycling, salvage and regulation"/>
</dbReference>
<dbReference type="Reactome" id="R-SCE-203615">
    <property type="pathway name" value="eNOS activation"/>
</dbReference>
<dbReference type="Reactome" id="R-SCE-3371497">
    <property type="pathway name" value="HSP90 chaperone cycle for steroid hormone receptors (SHR) in the presence of ligand"/>
</dbReference>
<dbReference type="Reactome" id="R-SCE-3371511">
    <property type="pathway name" value="HSF1 activation"/>
</dbReference>
<dbReference type="Reactome" id="R-SCE-3371571">
    <property type="pathway name" value="HSF1-dependent transactivation"/>
</dbReference>
<dbReference type="Reactome" id="R-SCE-5218920">
    <property type="pathway name" value="VEGFR2 mediated vascular permeability"/>
</dbReference>
<dbReference type="Reactome" id="R-SCE-6798695">
    <property type="pathway name" value="Neutrophil degranulation"/>
</dbReference>
<dbReference type="Reactome" id="R-SCE-9009391">
    <property type="pathway name" value="Extra-nuclear estrogen signaling"/>
</dbReference>
<dbReference type="BioGRID-ORCS" id="855224">
    <property type="hits" value="0 hits in 10 CRISPR screens"/>
</dbReference>
<dbReference type="PRO" id="PR:P15108"/>
<dbReference type="Proteomes" id="UP000002311">
    <property type="component" value="Chromosome XIII"/>
</dbReference>
<dbReference type="RNAct" id="P15108">
    <property type="molecule type" value="protein"/>
</dbReference>
<dbReference type="GO" id="GO:0005737">
    <property type="term" value="C:cytoplasm"/>
    <property type="evidence" value="ECO:0007005"/>
    <property type="project" value="SGD"/>
</dbReference>
<dbReference type="GO" id="GO:0005829">
    <property type="term" value="C:cytosol"/>
    <property type="evidence" value="ECO:0000318"/>
    <property type="project" value="GO_Central"/>
</dbReference>
<dbReference type="GO" id="GO:0005739">
    <property type="term" value="C:mitochondrion"/>
    <property type="evidence" value="ECO:0007005"/>
    <property type="project" value="SGD"/>
</dbReference>
<dbReference type="GO" id="GO:0048471">
    <property type="term" value="C:perinuclear region of cytoplasm"/>
    <property type="evidence" value="ECO:0000318"/>
    <property type="project" value="GO_Central"/>
</dbReference>
<dbReference type="GO" id="GO:0005886">
    <property type="term" value="C:plasma membrane"/>
    <property type="evidence" value="ECO:0007005"/>
    <property type="project" value="SGD"/>
</dbReference>
<dbReference type="GO" id="GO:0032991">
    <property type="term" value="C:protein-containing complex"/>
    <property type="evidence" value="ECO:0000318"/>
    <property type="project" value="GO_Central"/>
</dbReference>
<dbReference type="GO" id="GO:0005524">
    <property type="term" value="F:ATP binding"/>
    <property type="evidence" value="ECO:0000318"/>
    <property type="project" value="GO_Central"/>
</dbReference>
<dbReference type="GO" id="GO:0016887">
    <property type="term" value="F:ATP hydrolysis activity"/>
    <property type="evidence" value="ECO:0000314"/>
    <property type="project" value="SGD"/>
</dbReference>
<dbReference type="GO" id="GO:0140662">
    <property type="term" value="F:ATP-dependent protein folding chaperone"/>
    <property type="evidence" value="ECO:0007669"/>
    <property type="project" value="InterPro"/>
</dbReference>
<dbReference type="GO" id="GO:0051082">
    <property type="term" value="F:unfolded protein binding"/>
    <property type="evidence" value="ECO:0000314"/>
    <property type="project" value="SGD"/>
</dbReference>
<dbReference type="GO" id="GO:0000492">
    <property type="term" value="P:box C/D snoRNP assembly"/>
    <property type="evidence" value="ECO:0000315"/>
    <property type="project" value="SGD"/>
</dbReference>
<dbReference type="GO" id="GO:0034605">
    <property type="term" value="P:cellular response to heat"/>
    <property type="evidence" value="ECO:0000315"/>
    <property type="project" value="SGD"/>
</dbReference>
<dbReference type="GO" id="GO:0043248">
    <property type="term" value="P:proteasome assembly"/>
    <property type="evidence" value="ECO:0000315"/>
    <property type="project" value="SGD"/>
</dbReference>
<dbReference type="GO" id="GO:0006457">
    <property type="term" value="P:protein folding"/>
    <property type="evidence" value="ECO:0000315"/>
    <property type="project" value="SGD"/>
</dbReference>
<dbReference type="GO" id="GO:0050821">
    <property type="term" value="P:protein stabilization"/>
    <property type="evidence" value="ECO:0000318"/>
    <property type="project" value="GO_Central"/>
</dbReference>
<dbReference type="GO" id="GO:0070482">
    <property type="term" value="P:response to oxygen levels"/>
    <property type="evidence" value="ECO:0000303"/>
    <property type="project" value="ComplexPortal"/>
</dbReference>
<dbReference type="GO" id="GO:0000723">
    <property type="term" value="P:telomere maintenance"/>
    <property type="evidence" value="ECO:0000315"/>
    <property type="project" value="SGD"/>
</dbReference>
<dbReference type="CDD" id="cd16927">
    <property type="entry name" value="HATPase_Hsp90-like"/>
    <property type="match status" value="1"/>
</dbReference>
<dbReference type="FunFam" id="1.20.120.790:FF:000001">
    <property type="entry name" value="Heat shock protein 90 alpha"/>
    <property type="match status" value="1"/>
</dbReference>
<dbReference type="FunFam" id="3.30.230.80:FF:000001">
    <property type="entry name" value="Heat shock protein 90 alpha"/>
    <property type="match status" value="1"/>
</dbReference>
<dbReference type="FunFam" id="3.40.50.11260:FF:000001">
    <property type="entry name" value="Heat shock protein 90 alpha"/>
    <property type="match status" value="1"/>
</dbReference>
<dbReference type="FunFam" id="3.30.565.10:FF:000001">
    <property type="entry name" value="Heat shock protein HSP 90-alpha"/>
    <property type="match status" value="1"/>
</dbReference>
<dbReference type="Gene3D" id="3.30.230.80">
    <property type="match status" value="1"/>
</dbReference>
<dbReference type="Gene3D" id="3.40.50.11260">
    <property type="match status" value="1"/>
</dbReference>
<dbReference type="Gene3D" id="1.20.120.790">
    <property type="entry name" value="Heat shock protein 90, C-terminal domain"/>
    <property type="match status" value="1"/>
</dbReference>
<dbReference type="Gene3D" id="3.30.565.10">
    <property type="entry name" value="Histidine kinase-like ATPase, C-terminal domain"/>
    <property type="match status" value="1"/>
</dbReference>
<dbReference type="HAMAP" id="MF_00505">
    <property type="entry name" value="HSP90"/>
    <property type="match status" value="1"/>
</dbReference>
<dbReference type="InterPro" id="IPR036890">
    <property type="entry name" value="HATPase_C_sf"/>
</dbReference>
<dbReference type="InterPro" id="IPR019805">
    <property type="entry name" value="Heat_shock_protein_90_CS"/>
</dbReference>
<dbReference type="InterPro" id="IPR037196">
    <property type="entry name" value="HSP90_C"/>
</dbReference>
<dbReference type="InterPro" id="IPR001404">
    <property type="entry name" value="Hsp90_fam"/>
</dbReference>
<dbReference type="InterPro" id="IPR020575">
    <property type="entry name" value="Hsp90_N"/>
</dbReference>
<dbReference type="InterPro" id="IPR020568">
    <property type="entry name" value="Ribosomal_Su5_D2-typ_SF"/>
</dbReference>
<dbReference type="NCBIfam" id="NF003555">
    <property type="entry name" value="PRK05218.1"/>
    <property type="match status" value="1"/>
</dbReference>
<dbReference type="PANTHER" id="PTHR11528">
    <property type="entry name" value="HEAT SHOCK PROTEIN 90 FAMILY MEMBER"/>
    <property type="match status" value="1"/>
</dbReference>
<dbReference type="Pfam" id="PF13589">
    <property type="entry name" value="HATPase_c_3"/>
    <property type="match status" value="1"/>
</dbReference>
<dbReference type="Pfam" id="PF00183">
    <property type="entry name" value="HSP90"/>
    <property type="match status" value="1"/>
</dbReference>
<dbReference type="PIRSF" id="PIRSF002583">
    <property type="entry name" value="Hsp90"/>
    <property type="match status" value="1"/>
</dbReference>
<dbReference type="PRINTS" id="PR00775">
    <property type="entry name" value="HEATSHOCK90"/>
</dbReference>
<dbReference type="SMART" id="SM00387">
    <property type="entry name" value="HATPase_c"/>
    <property type="match status" value="1"/>
</dbReference>
<dbReference type="SUPFAM" id="SSF55874">
    <property type="entry name" value="ATPase domain of HSP90 chaperone/DNA topoisomerase II/histidine kinase"/>
    <property type="match status" value="1"/>
</dbReference>
<dbReference type="SUPFAM" id="SSF110942">
    <property type="entry name" value="HSP90 C-terminal domain"/>
    <property type="match status" value="1"/>
</dbReference>
<dbReference type="SUPFAM" id="SSF54211">
    <property type="entry name" value="Ribosomal protein S5 domain 2-like"/>
    <property type="match status" value="1"/>
</dbReference>
<dbReference type="PROSITE" id="PS00298">
    <property type="entry name" value="HSP90"/>
    <property type="match status" value="1"/>
</dbReference>
<name>HSC82_YEAST</name>
<organism>
    <name type="scientific">Saccharomyces cerevisiae (strain ATCC 204508 / S288c)</name>
    <name type="common">Baker's yeast</name>
    <dbReference type="NCBI Taxonomy" id="559292"/>
    <lineage>
        <taxon>Eukaryota</taxon>
        <taxon>Fungi</taxon>
        <taxon>Dikarya</taxon>
        <taxon>Ascomycota</taxon>
        <taxon>Saccharomycotina</taxon>
        <taxon>Saccharomycetes</taxon>
        <taxon>Saccharomycetales</taxon>
        <taxon>Saccharomycetaceae</taxon>
        <taxon>Saccharomyces</taxon>
    </lineage>
</organism>
<reference key="1">
    <citation type="journal article" date="1989" name="Mol. Cell. Biol.">
        <title>hsp82 is an essential protein that is required in higher concentrations for growth of cells at higher temperatures.</title>
        <authorList>
            <person name="Borkovich K.A."/>
            <person name="Farrelly F.W."/>
            <person name="Finkelstein D.B."/>
            <person name="Taulien J."/>
            <person name="Lindquist S."/>
        </authorList>
    </citation>
    <scope>NUCLEOTIDE SEQUENCE</scope>
    <scope>INDUCTION</scope>
</reference>
<reference key="2">
    <citation type="journal article" date="1997" name="Nature">
        <title>The nucleotide sequence of Saccharomyces cerevisiae chromosome XIII.</title>
        <authorList>
            <person name="Bowman S."/>
            <person name="Churcher C.M."/>
            <person name="Badcock K."/>
            <person name="Brown D."/>
            <person name="Chillingworth T."/>
            <person name="Connor R."/>
            <person name="Dedman K."/>
            <person name="Devlin K."/>
            <person name="Gentles S."/>
            <person name="Hamlin N."/>
            <person name="Hunt S."/>
            <person name="Jagels K."/>
            <person name="Lye G."/>
            <person name="Moule S."/>
            <person name="Odell C."/>
            <person name="Pearson D."/>
            <person name="Rajandream M.A."/>
            <person name="Rice P."/>
            <person name="Skelton J."/>
            <person name="Walsh S.V."/>
            <person name="Whitehead S."/>
            <person name="Barrell B.G."/>
        </authorList>
    </citation>
    <scope>NUCLEOTIDE SEQUENCE [LARGE SCALE GENOMIC DNA]</scope>
    <source>
        <strain>ATCC 204508 / S288c</strain>
    </source>
</reference>
<reference key="3">
    <citation type="journal article" date="2014" name="G3 (Bethesda)">
        <title>The reference genome sequence of Saccharomyces cerevisiae: Then and now.</title>
        <authorList>
            <person name="Engel S.R."/>
            <person name="Dietrich F.S."/>
            <person name="Fisk D.G."/>
            <person name="Binkley G."/>
            <person name="Balakrishnan R."/>
            <person name="Costanzo M.C."/>
            <person name="Dwight S.S."/>
            <person name="Hitz B.C."/>
            <person name="Karra K."/>
            <person name="Nash R.S."/>
            <person name="Weng S."/>
            <person name="Wong E.D."/>
            <person name="Lloyd P."/>
            <person name="Skrzypek M.S."/>
            <person name="Miyasato S.R."/>
            <person name="Simison M."/>
            <person name="Cherry J.M."/>
        </authorList>
    </citation>
    <scope>GENOME REANNOTATION</scope>
    <source>
        <strain>ATCC 204508 / S288c</strain>
    </source>
</reference>
<reference key="4">
    <citation type="journal article" date="1995" name="Yeast">
        <title>Two-dimensional protein map of Saccharomyces cerevisiae: construction of a gene-protein index.</title>
        <authorList>
            <person name="Boucherie H."/>
            <person name="Dujardin G."/>
            <person name="Kermorgant M."/>
            <person name="Monribot C."/>
            <person name="Slonimski P.P."/>
            <person name="Perrot M."/>
        </authorList>
    </citation>
    <scope>PROTEIN SEQUENCE OF 2-8</scope>
    <source>
        <strain>ATCC 204508 / S288c</strain>
    </source>
</reference>
<reference key="5">
    <citation type="journal article" date="1997" name="J. Cell Sci.">
        <title>A yeast heat shock transcription factor (Hsf1) mutant is defective in both Hsc82/Hsp82 synthesis and spindle pole body duplication.</title>
        <authorList>
            <person name="Zarzov P."/>
            <person name="Boucherie H."/>
            <person name="Mann C."/>
        </authorList>
    </citation>
    <scope>INDUCTION</scope>
</reference>
<reference key="6">
    <citation type="journal article" date="2000" name="Mol. Cell. Biol.">
        <title>Role of HSP90 in salt stress tolerance via stabilization and regulation of calcineurin.</title>
        <authorList>
            <person name="Imai J."/>
            <person name="Yahara I."/>
        </authorList>
    </citation>
    <scope>FUNCTION</scope>
    <scope>INTERACTION WITH CNA2</scope>
</reference>
<reference key="7">
    <citation type="journal article" date="2002" name="J. Biol. Chem.">
        <title>Interaction between the N-terminal and middle regions is essential for the in vivo function of HSP90 molecular chaperone.</title>
        <authorList>
            <person name="Matsumoto S."/>
            <person name="Tanaka E."/>
            <person name="Nemoto T.K."/>
            <person name="Ono T."/>
            <person name="Takagi T."/>
            <person name="Imai J."/>
            <person name="Kimura Y."/>
            <person name="Yahara I."/>
            <person name="Kobayakawa T."/>
            <person name="Ayuse T."/>
            <person name="Oi K."/>
            <person name="Mizuno A."/>
        </authorList>
    </citation>
    <scope>MUTAGENESIS OF LEU-453 AND GLU-493</scope>
</reference>
<reference key="8">
    <citation type="journal article" date="2004" name="Mol. Cell. Biol.">
        <title>Sgt1 associates with Hsp90: an initial step of assembly of the core kinetochore complex.</title>
        <authorList>
            <person name="Bansal P.K."/>
            <person name="Abdulle R."/>
            <person name="Kitagawa K."/>
        </authorList>
    </citation>
    <scope>INTERACTION WITH SGT1</scope>
</reference>
<reference key="9">
    <citation type="journal article" date="2003" name="Nature">
        <title>Global analysis of protein localization in budding yeast.</title>
        <authorList>
            <person name="Huh W.-K."/>
            <person name="Falvo J.V."/>
            <person name="Gerke L.C."/>
            <person name="Carroll A.S."/>
            <person name="Howson R.W."/>
            <person name="Weissman J.S."/>
            <person name="O'Shea E.K."/>
        </authorList>
    </citation>
    <scope>SUBCELLULAR LOCATION [LARGE SCALE ANALYSIS]</scope>
</reference>
<reference key="10">
    <citation type="journal article" date="2003" name="Nature">
        <title>Global analysis of protein expression in yeast.</title>
        <authorList>
            <person name="Ghaemmaghami S."/>
            <person name="Huh W.-K."/>
            <person name="Bower K."/>
            <person name="Howson R.W."/>
            <person name="Belle A."/>
            <person name="Dephoure N."/>
            <person name="O'Shea E.K."/>
            <person name="Weissman J.S."/>
        </authorList>
    </citation>
    <scope>LEVEL OF PROTEIN EXPRESSION [LARGE SCALE ANALYSIS]</scope>
</reference>
<reference key="11">
    <citation type="journal article" date="2003" name="Proc. Natl. Acad. Sci. U.S.A.">
        <title>The proteome of Saccharomyces cerevisiae mitochondria.</title>
        <authorList>
            <person name="Sickmann A."/>
            <person name="Reinders J."/>
            <person name="Wagner Y."/>
            <person name="Joppich C."/>
            <person name="Zahedi R.P."/>
            <person name="Meyer H.E."/>
            <person name="Schoenfisch B."/>
            <person name="Perschil I."/>
            <person name="Chacinska A."/>
            <person name="Guiard B."/>
            <person name="Rehling P."/>
            <person name="Pfanner N."/>
            <person name="Meisinger C."/>
        </authorList>
    </citation>
    <scope>SUBCELLULAR LOCATION [LARGE SCALE ANALYSIS]</scope>
    <source>
        <strain>ATCC 76625 / YPH499</strain>
    </source>
</reference>
<reference key="12">
    <citation type="journal article" date="2008" name="Mol. Cell. Biol.">
        <title>Phosphorylation by casein kinase 2 regulates Nap1 localization and function.</title>
        <authorList>
            <person name="Calvert M.E.K."/>
            <person name="Keck K.M."/>
            <person name="Ptak C."/>
            <person name="Shabanowitz J."/>
            <person name="Hunt D.F."/>
            <person name="Pemberton L.F."/>
        </authorList>
    </citation>
    <scope>INTERACTION WITH NAP1</scope>
    <scope>IDENTIFICATION BY MASS SPECTROMETRY</scope>
</reference>
<reference key="13">
    <citation type="journal article" date="2008" name="Mol. Cell. Proteomics">
        <title>A multidimensional chromatography technology for in-depth phosphoproteome analysis.</title>
        <authorList>
            <person name="Albuquerque C.P."/>
            <person name="Smolka M.B."/>
            <person name="Payne S.H."/>
            <person name="Bafna V."/>
            <person name="Eng J."/>
            <person name="Zhou H."/>
        </authorList>
    </citation>
    <scope>PHOSPHORYLATION [LARGE SCALE ANALYSIS] AT SER-653</scope>
    <scope>IDENTIFICATION BY MASS SPECTROMETRY [LARGE SCALE ANALYSIS]</scope>
</reference>